<protein>
    <recommendedName>
        <fullName evidence="1">RNA pyrophosphohydrolase</fullName>
        <ecNumber evidence="1">3.6.1.-</ecNumber>
    </recommendedName>
    <alternativeName>
        <fullName evidence="1">(Di)nucleoside polyphosphate hydrolase</fullName>
    </alternativeName>
</protein>
<name>RPPH_HELPY</name>
<keyword id="KW-0378">Hydrolase</keyword>
<keyword id="KW-1185">Reference proteome</keyword>
<evidence type="ECO:0000255" key="1">
    <source>
        <dbReference type="HAMAP-Rule" id="MF_00298"/>
    </source>
</evidence>
<proteinExistence type="inferred from homology"/>
<feature type="chain" id="PRO_0000057010" description="RNA pyrophosphohydrolase">
    <location>
        <begin position="1"/>
        <end position="155"/>
    </location>
</feature>
<feature type="domain" description="Nudix hydrolase" evidence="1">
    <location>
        <begin position="5"/>
        <end position="147"/>
    </location>
</feature>
<feature type="short sequence motif" description="Nudix box">
    <location>
        <begin position="42"/>
        <end position="63"/>
    </location>
</feature>
<comment type="function">
    <text evidence="1">Accelerates the degradation of transcripts by removing pyrophosphate from the 5'-end of triphosphorylated RNA, leading to a more labile monophosphorylated state that can stimulate subsequent ribonuclease cleavage.</text>
</comment>
<comment type="cofactor">
    <cofactor evidence="1">
        <name>a divalent metal cation</name>
        <dbReference type="ChEBI" id="CHEBI:60240"/>
    </cofactor>
</comment>
<comment type="similarity">
    <text evidence="1">Belongs to the Nudix hydrolase family. RppH subfamily.</text>
</comment>
<organism>
    <name type="scientific">Helicobacter pylori (strain ATCC 700392 / 26695)</name>
    <name type="common">Campylobacter pylori</name>
    <dbReference type="NCBI Taxonomy" id="85962"/>
    <lineage>
        <taxon>Bacteria</taxon>
        <taxon>Pseudomonadati</taxon>
        <taxon>Campylobacterota</taxon>
        <taxon>Epsilonproteobacteria</taxon>
        <taxon>Campylobacterales</taxon>
        <taxon>Helicobacteraceae</taxon>
        <taxon>Helicobacter</taxon>
    </lineage>
</organism>
<reference key="1">
    <citation type="journal article" date="1997" name="Nature">
        <title>The complete genome sequence of the gastric pathogen Helicobacter pylori.</title>
        <authorList>
            <person name="Tomb J.-F."/>
            <person name="White O."/>
            <person name="Kerlavage A.R."/>
            <person name="Clayton R.A."/>
            <person name="Sutton G.G."/>
            <person name="Fleischmann R.D."/>
            <person name="Ketchum K.A."/>
            <person name="Klenk H.-P."/>
            <person name="Gill S.R."/>
            <person name="Dougherty B.A."/>
            <person name="Nelson K.E."/>
            <person name="Quackenbush J."/>
            <person name="Zhou L."/>
            <person name="Kirkness E.F."/>
            <person name="Peterson S.N."/>
            <person name="Loftus B.J."/>
            <person name="Richardson D.L."/>
            <person name="Dodson R.J."/>
            <person name="Khalak H.G."/>
            <person name="Glodek A."/>
            <person name="McKenney K."/>
            <person name="FitzGerald L.M."/>
            <person name="Lee N."/>
            <person name="Adams M.D."/>
            <person name="Hickey E.K."/>
            <person name="Berg D.E."/>
            <person name="Gocayne J.D."/>
            <person name="Utterback T.R."/>
            <person name="Peterson J.D."/>
            <person name="Kelley J.M."/>
            <person name="Cotton M.D."/>
            <person name="Weidman J.F."/>
            <person name="Fujii C."/>
            <person name="Bowman C."/>
            <person name="Watthey L."/>
            <person name="Wallin E."/>
            <person name="Hayes W.S."/>
            <person name="Borodovsky M."/>
            <person name="Karp P.D."/>
            <person name="Smith H.O."/>
            <person name="Fraser C.M."/>
            <person name="Venter J.C."/>
        </authorList>
    </citation>
    <scope>NUCLEOTIDE SEQUENCE [LARGE SCALE GENOMIC DNA]</scope>
    <source>
        <strain>ATCC 700392 / 26695</strain>
    </source>
</reference>
<dbReference type="EC" id="3.6.1.-" evidence="1"/>
<dbReference type="EMBL" id="AE000511">
    <property type="protein sequence ID" value="AAD08273.1"/>
    <property type="molecule type" value="Genomic_DNA"/>
</dbReference>
<dbReference type="PIR" id="D64673">
    <property type="entry name" value="D64673"/>
</dbReference>
<dbReference type="RefSeq" id="NP_208020.1">
    <property type="nucleotide sequence ID" value="NC_000915.1"/>
</dbReference>
<dbReference type="RefSeq" id="WP_000902563.1">
    <property type="nucleotide sequence ID" value="NC_018939.1"/>
</dbReference>
<dbReference type="SMR" id="O25826"/>
<dbReference type="FunCoup" id="O25826">
    <property type="interactions" value="175"/>
</dbReference>
<dbReference type="IntAct" id="O25826">
    <property type="interactions" value="2"/>
</dbReference>
<dbReference type="STRING" id="85962.HP_1228"/>
<dbReference type="PaxDb" id="85962-C694_06340"/>
<dbReference type="EnsemblBacteria" id="AAD08273">
    <property type="protein sequence ID" value="AAD08273"/>
    <property type="gene ID" value="HP_1228"/>
</dbReference>
<dbReference type="KEGG" id="heo:C694_06340"/>
<dbReference type="KEGG" id="hpy:HP_1228"/>
<dbReference type="PATRIC" id="fig|85962.47.peg.1316"/>
<dbReference type="eggNOG" id="COG0494">
    <property type="taxonomic scope" value="Bacteria"/>
</dbReference>
<dbReference type="InParanoid" id="O25826"/>
<dbReference type="OrthoDB" id="9810648at2"/>
<dbReference type="PhylomeDB" id="O25826"/>
<dbReference type="Proteomes" id="UP000000429">
    <property type="component" value="Chromosome"/>
</dbReference>
<dbReference type="GO" id="GO:0005737">
    <property type="term" value="C:cytoplasm"/>
    <property type="evidence" value="ECO:0000318"/>
    <property type="project" value="GO_Central"/>
</dbReference>
<dbReference type="GO" id="GO:0034353">
    <property type="term" value="F:mRNA 5'-diphosphatase activity"/>
    <property type="evidence" value="ECO:0000318"/>
    <property type="project" value="GO_Central"/>
</dbReference>
<dbReference type="GO" id="GO:0006402">
    <property type="term" value="P:mRNA catabolic process"/>
    <property type="evidence" value="ECO:0000318"/>
    <property type="project" value="GO_Central"/>
</dbReference>
<dbReference type="CDD" id="cd03671">
    <property type="entry name" value="NUDIX_Ap4A_hydrolase_plant_like"/>
    <property type="match status" value="1"/>
</dbReference>
<dbReference type="FunFam" id="3.90.79.10:FF:000084">
    <property type="entry name" value="RNA pyrophosphohydrolase"/>
    <property type="match status" value="1"/>
</dbReference>
<dbReference type="Gene3D" id="3.90.79.10">
    <property type="entry name" value="Nucleoside Triphosphate Pyrophosphohydrolase"/>
    <property type="match status" value="1"/>
</dbReference>
<dbReference type="HAMAP" id="MF_00298">
    <property type="entry name" value="Nudix_RppH"/>
    <property type="match status" value="1"/>
</dbReference>
<dbReference type="InterPro" id="IPR020476">
    <property type="entry name" value="Nudix_hydrolase"/>
</dbReference>
<dbReference type="InterPro" id="IPR015797">
    <property type="entry name" value="NUDIX_hydrolase-like_dom_sf"/>
</dbReference>
<dbReference type="InterPro" id="IPR020084">
    <property type="entry name" value="NUDIX_hydrolase_CS"/>
</dbReference>
<dbReference type="InterPro" id="IPR000086">
    <property type="entry name" value="NUDIX_hydrolase_dom"/>
</dbReference>
<dbReference type="InterPro" id="IPR022927">
    <property type="entry name" value="RppH"/>
</dbReference>
<dbReference type="NCBIfam" id="NF001936">
    <property type="entry name" value="PRK00714.1-3"/>
    <property type="match status" value="1"/>
</dbReference>
<dbReference type="NCBIfam" id="NF001938">
    <property type="entry name" value="PRK00714.1-5"/>
    <property type="match status" value="1"/>
</dbReference>
<dbReference type="PANTHER" id="PTHR23114">
    <property type="entry name" value="M7GPPPN-MRNA HYDROLASE"/>
    <property type="match status" value="1"/>
</dbReference>
<dbReference type="PANTHER" id="PTHR23114:SF17">
    <property type="entry name" value="M7GPPPN-MRNA HYDROLASE"/>
    <property type="match status" value="1"/>
</dbReference>
<dbReference type="Pfam" id="PF00293">
    <property type="entry name" value="NUDIX"/>
    <property type="match status" value="1"/>
</dbReference>
<dbReference type="PRINTS" id="PR00502">
    <property type="entry name" value="NUDIXFAMILY"/>
</dbReference>
<dbReference type="SUPFAM" id="SSF55811">
    <property type="entry name" value="Nudix"/>
    <property type="match status" value="1"/>
</dbReference>
<dbReference type="PROSITE" id="PS51462">
    <property type="entry name" value="NUDIX"/>
    <property type="match status" value="1"/>
</dbReference>
<dbReference type="PROSITE" id="PS00893">
    <property type="entry name" value="NUDIX_BOX"/>
    <property type="match status" value="1"/>
</dbReference>
<accession>O25826</accession>
<sequence length="155" mass="18550">MLHKKYRPNVAAIIMSPDYPNACEVFIAERIDIEGAWQFPQGGIDEGETPLEALHRELLEEIGTNEIEILAQYPRWIAYDFPSNMEHKFYSFDGQKQRYFLVRLKHTNNIDLNKHTPEFRAYQFIHLKDLLKRIVPFKRQVYRQVIAYFKREGYL</sequence>
<gene>
    <name evidence="1" type="primary">rppH</name>
    <name evidence="1" type="synonym">nudH</name>
    <name type="ordered locus">HP_1228</name>
</gene>